<gene>
    <name evidence="1" type="primary">atpF</name>
    <name type="ordered locus">Caul_4380</name>
</gene>
<name>ATPF_CAUSK</name>
<comment type="function">
    <text evidence="1">F(1)F(0) ATP synthase produces ATP from ADP in the presence of a proton or sodium gradient. F-type ATPases consist of two structural domains, F(1) containing the extramembraneous catalytic core and F(0) containing the membrane proton channel, linked together by a central stalk and a peripheral stalk. During catalysis, ATP synthesis in the catalytic domain of F(1) is coupled via a rotary mechanism of the central stalk subunits to proton translocation.</text>
</comment>
<comment type="function">
    <text evidence="1">Component of the F(0) channel, it forms part of the peripheral stalk, linking F(1) to F(0).</text>
</comment>
<comment type="subunit">
    <text evidence="1">F-type ATPases have 2 components, F(1) - the catalytic core - and F(0) - the membrane proton channel. F(1) has five subunits: alpha(3), beta(3), gamma(1), delta(1), epsilon(1). F(0) has three main subunits: a(1), b(2) and c(10-14). The alpha and beta chains form an alternating ring which encloses part of the gamma chain. F(1) is attached to F(0) by a central stalk formed by the gamma and epsilon chains, while a peripheral stalk is formed by the delta and b chains.</text>
</comment>
<comment type="subcellular location">
    <subcellularLocation>
        <location evidence="1">Cell inner membrane</location>
        <topology evidence="1">Single-pass membrane protein</topology>
    </subcellularLocation>
</comment>
<comment type="similarity">
    <text evidence="1">Belongs to the ATPase B chain family.</text>
</comment>
<accession>B0T010</accession>
<protein>
    <recommendedName>
        <fullName evidence="1">ATP synthase subunit b</fullName>
    </recommendedName>
    <alternativeName>
        <fullName evidence="1">ATP synthase F(0) sector subunit b</fullName>
    </alternativeName>
    <alternativeName>
        <fullName evidence="1">ATPase subunit I</fullName>
    </alternativeName>
    <alternativeName>
        <fullName evidence="1">F-type ATPase subunit b</fullName>
        <shortName evidence="1">F-ATPase subunit b</shortName>
    </alternativeName>
</protein>
<feature type="chain" id="PRO_0000368405" description="ATP synthase subunit b">
    <location>
        <begin position="1"/>
        <end position="171"/>
    </location>
</feature>
<feature type="transmembrane region" description="Helical" evidence="1">
    <location>
        <begin position="19"/>
        <end position="39"/>
    </location>
</feature>
<organism>
    <name type="scientific">Caulobacter sp. (strain K31)</name>
    <dbReference type="NCBI Taxonomy" id="366602"/>
    <lineage>
        <taxon>Bacteria</taxon>
        <taxon>Pseudomonadati</taxon>
        <taxon>Pseudomonadota</taxon>
        <taxon>Alphaproteobacteria</taxon>
        <taxon>Caulobacterales</taxon>
        <taxon>Caulobacteraceae</taxon>
        <taxon>Caulobacter</taxon>
    </lineage>
</organism>
<keyword id="KW-0066">ATP synthesis</keyword>
<keyword id="KW-0997">Cell inner membrane</keyword>
<keyword id="KW-1003">Cell membrane</keyword>
<keyword id="KW-0138">CF(0)</keyword>
<keyword id="KW-0375">Hydrogen ion transport</keyword>
<keyword id="KW-0406">Ion transport</keyword>
<keyword id="KW-0472">Membrane</keyword>
<keyword id="KW-0812">Transmembrane</keyword>
<keyword id="KW-1133">Transmembrane helix</keyword>
<keyword id="KW-0813">Transport</keyword>
<evidence type="ECO:0000255" key="1">
    <source>
        <dbReference type="HAMAP-Rule" id="MF_01398"/>
    </source>
</evidence>
<reference key="1">
    <citation type="submission" date="2008-01" db="EMBL/GenBank/DDBJ databases">
        <title>Complete sequence of chromosome of Caulobacter sp. K31.</title>
        <authorList>
            <consortium name="US DOE Joint Genome Institute"/>
            <person name="Copeland A."/>
            <person name="Lucas S."/>
            <person name="Lapidus A."/>
            <person name="Barry K."/>
            <person name="Glavina del Rio T."/>
            <person name="Dalin E."/>
            <person name="Tice H."/>
            <person name="Pitluck S."/>
            <person name="Bruce D."/>
            <person name="Goodwin L."/>
            <person name="Thompson L.S."/>
            <person name="Brettin T."/>
            <person name="Detter J.C."/>
            <person name="Han C."/>
            <person name="Schmutz J."/>
            <person name="Larimer F."/>
            <person name="Land M."/>
            <person name="Hauser L."/>
            <person name="Kyrpides N."/>
            <person name="Kim E."/>
            <person name="Stephens C."/>
            <person name="Richardson P."/>
        </authorList>
    </citation>
    <scope>NUCLEOTIDE SEQUENCE [LARGE SCALE GENOMIC DNA]</scope>
    <source>
        <strain>K31</strain>
    </source>
</reference>
<proteinExistence type="inferred from homology"/>
<sequence>MPAFFEGEFWQIANPELWVGVGLILFIAIVIWAKAPAMIAGKLDETAAKIQTDLDEAARIRAEAEALLATIRAEREETERQAIAMLAAAKADVAQMEIEAKAKLEDQIKRRAEMAERKIAQSEAQAQADVKAAAVDLAAQIAEQVLMARLAAGGSDGLVDTAIGQIGAKLQ</sequence>
<dbReference type="EMBL" id="CP000927">
    <property type="protein sequence ID" value="ABZ73500.1"/>
    <property type="molecule type" value="Genomic_DNA"/>
</dbReference>
<dbReference type="SMR" id="B0T010"/>
<dbReference type="STRING" id="366602.Caul_4380"/>
<dbReference type="KEGG" id="cak:Caul_4380"/>
<dbReference type="eggNOG" id="COG0711">
    <property type="taxonomic scope" value="Bacteria"/>
</dbReference>
<dbReference type="HOGENOM" id="CLU_079215_6_1_5"/>
<dbReference type="OrthoDB" id="7210836at2"/>
<dbReference type="GO" id="GO:0005886">
    <property type="term" value="C:plasma membrane"/>
    <property type="evidence" value="ECO:0007669"/>
    <property type="project" value="UniProtKB-SubCell"/>
</dbReference>
<dbReference type="GO" id="GO:0045259">
    <property type="term" value="C:proton-transporting ATP synthase complex"/>
    <property type="evidence" value="ECO:0007669"/>
    <property type="project" value="UniProtKB-KW"/>
</dbReference>
<dbReference type="GO" id="GO:0046933">
    <property type="term" value="F:proton-transporting ATP synthase activity, rotational mechanism"/>
    <property type="evidence" value="ECO:0007669"/>
    <property type="project" value="UniProtKB-UniRule"/>
</dbReference>
<dbReference type="HAMAP" id="MF_01398">
    <property type="entry name" value="ATP_synth_b_bprime"/>
    <property type="match status" value="1"/>
</dbReference>
<dbReference type="InterPro" id="IPR002146">
    <property type="entry name" value="ATP_synth_b/b'su_bac/chlpt"/>
</dbReference>
<dbReference type="NCBIfam" id="NF011045">
    <property type="entry name" value="PRK14475.1"/>
    <property type="match status" value="1"/>
</dbReference>
<dbReference type="Pfam" id="PF00430">
    <property type="entry name" value="ATP-synt_B"/>
    <property type="match status" value="1"/>
</dbReference>